<evidence type="ECO:0000255" key="1">
    <source>
        <dbReference type="HAMAP-Rule" id="MF_00646"/>
    </source>
</evidence>
<gene>
    <name type="ordered locus">XC_2359</name>
</gene>
<organism>
    <name type="scientific">Xanthomonas campestris pv. campestris (strain 8004)</name>
    <dbReference type="NCBI Taxonomy" id="314565"/>
    <lineage>
        <taxon>Bacteria</taxon>
        <taxon>Pseudomonadati</taxon>
        <taxon>Pseudomonadota</taxon>
        <taxon>Gammaproteobacteria</taxon>
        <taxon>Lysobacterales</taxon>
        <taxon>Lysobacteraceae</taxon>
        <taxon>Xanthomonas</taxon>
    </lineage>
</organism>
<feature type="chain" id="PRO_0000259903" description="Elongation factor P-like protein">
    <location>
        <begin position="1"/>
        <end position="188"/>
    </location>
</feature>
<accession>Q4UU61</accession>
<proteinExistence type="inferred from homology"/>
<dbReference type="EMBL" id="CP000050">
    <property type="protein sequence ID" value="AAY49412.1"/>
    <property type="molecule type" value="Genomic_DNA"/>
</dbReference>
<dbReference type="SMR" id="Q4UU61"/>
<dbReference type="KEGG" id="xcb:XC_2359"/>
<dbReference type="HOGENOM" id="CLU_074944_2_0_6"/>
<dbReference type="PHI-base" id="PHI:3953"/>
<dbReference type="Proteomes" id="UP000000420">
    <property type="component" value="Chromosome"/>
</dbReference>
<dbReference type="GO" id="GO:0005737">
    <property type="term" value="C:cytoplasm"/>
    <property type="evidence" value="ECO:0007669"/>
    <property type="project" value="InterPro"/>
</dbReference>
<dbReference type="GO" id="GO:0003746">
    <property type="term" value="F:translation elongation factor activity"/>
    <property type="evidence" value="ECO:0007669"/>
    <property type="project" value="UniProtKB-UniRule"/>
</dbReference>
<dbReference type="GO" id="GO:0043043">
    <property type="term" value="P:peptide biosynthetic process"/>
    <property type="evidence" value="ECO:0007669"/>
    <property type="project" value="InterPro"/>
</dbReference>
<dbReference type="CDD" id="cd04470">
    <property type="entry name" value="S1_EF-P_repeat_1"/>
    <property type="match status" value="1"/>
</dbReference>
<dbReference type="CDD" id="cd05794">
    <property type="entry name" value="S1_EF-P_repeat_2"/>
    <property type="match status" value="1"/>
</dbReference>
<dbReference type="FunFam" id="2.40.50.140:FF:000004">
    <property type="entry name" value="Elongation factor P"/>
    <property type="match status" value="1"/>
</dbReference>
<dbReference type="FunFam" id="2.30.30.30:FF:000036">
    <property type="entry name" value="Elongation factor P-like protein"/>
    <property type="match status" value="1"/>
</dbReference>
<dbReference type="FunFam" id="2.40.50.140:FF:000233">
    <property type="entry name" value="Elongation factor P-like protein"/>
    <property type="match status" value="1"/>
</dbReference>
<dbReference type="Gene3D" id="2.30.30.30">
    <property type="match status" value="1"/>
</dbReference>
<dbReference type="Gene3D" id="2.40.50.140">
    <property type="entry name" value="Nucleic acid-binding proteins"/>
    <property type="match status" value="2"/>
</dbReference>
<dbReference type="HAMAP" id="MF_00646">
    <property type="entry name" value="EFP"/>
    <property type="match status" value="1"/>
</dbReference>
<dbReference type="InterPro" id="IPR015365">
    <property type="entry name" value="Elong-fact-P_C"/>
</dbReference>
<dbReference type="InterPro" id="IPR012340">
    <property type="entry name" value="NA-bd_OB-fold"/>
</dbReference>
<dbReference type="InterPro" id="IPR014722">
    <property type="entry name" value="Rib_uL2_dom2"/>
</dbReference>
<dbReference type="InterPro" id="IPR020599">
    <property type="entry name" value="Transl_elong_fac_P/YeiP"/>
</dbReference>
<dbReference type="InterPro" id="IPR013185">
    <property type="entry name" value="Transl_elong_KOW-like"/>
</dbReference>
<dbReference type="InterPro" id="IPR011897">
    <property type="entry name" value="Transl_elong_p-like_YeiP"/>
</dbReference>
<dbReference type="InterPro" id="IPR001059">
    <property type="entry name" value="Transl_elong_P/YeiP_cen"/>
</dbReference>
<dbReference type="InterPro" id="IPR013852">
    <property type="entry name" value="Transl_elong_P/YeiP_CS"/>
</dbReference>
<dbReference type="InterPro" id="IPR008991">
    <property type="entry name" value="Translation_prot_SH3-like_sf"/>
</dbReference>
<dbReference type="NCBIfam" id="NF001810">
    <property type="entry name" value="PRK00529.1"/>
    <property type="match status" value="1"/>
</dbReference>
<dbReference type="NCBIfam" id="NF003392">
    <property type="entry name" value="PRK04542.1"/>
    <property type="match status" value="1"/>
</dbReference>
<dbReference type="NCBIfam" id="TIGR02178">
    <property type="entry name" value="yeiP"/>
    <property type="match status" value="1"/>
</dbReference>
<dbReference type="PANTHER" id="PTHR30053">
    <property type="entry name" value="ELONGATION FACTOR P"/>
    <property type="match status" value="1"/>
</dbReference>
<dbReference type="PANTHER" id="PTHR30053:SF14">
    <property type="entry name" value="TRANSLATION ELONGATION FACTOR KOW-LIKE DOMAIN-CONTAINING PROTEIN"/>
    <property type="match status" value="1"/>
</dbReference>
<dbReference type="Pfam" id="PF01132">
    <property type="entry name" value="EFP"/>
    <property type="match status" value="1"/>
</dbReference>
<dbReference type="Pfam" id="PF08207">
    <property type="entry name" value="EFP_N"/>
    <property type="match status" value="1"/>
</dbReference>
<dbReference type="Pfam" id="PF09285">
    <property type="entry name" value="Elong-fact-P_C"/>
    <property type="match status" value="1"/>
</dbReference>
<dbReference type="PIRSF" id="PIRSF005901">
    <property type="entry name" value="EF-P"/>
    <property type="match status" value="1"/>
</dbReference>
<dbReference type="SMART" id="SM01185">
    <property type="entry name" value="EFP"/>
    <property type="match status" value="1"/>
</dbReference>
<dbReference type="SMART" id="SM00841">
    <property type="entry name" value="Elong-fact-P_C"/>
    <property type="match status" value="1"/>
</dbReference>
<dbReference type="SUPFAM" id="SSF50249">
    <property type="entry name" value="Nucleic acid-binding proteins"/>
    <property type="match status" value="2"/>
</dbReference>
<dbReference type="SUPFAM" id="SSF50104">
    <property type="entry name" value="Translation proteins SH3-like domain"/>
    <property type="match status" value="1"/>
</dbReference>
<dbReference type="PROSITE" id="PS01275">
    <property type="entry name" value="EFP"/>
    <property type="match status" value="1"/>
</dbReference>
<name>EFPL_XANC8</name>
<protein>
    <recommendedName>
        <fullName evidence="1">Elongation factor P-like protein</fullName>
    </recommendedName>
</protein>
<sequence>MKANDIKKGNVVEYNGGIYQIRDIERSSPQGRGGNVRFRFIMYSVPGGAKLDASFDADDNLPEVELLRRQSTYSYKDGEAFVFMDDEDYTPYMLDAEVIGTDAGYITDGLTGIFVQVIDDQPVAVQLPQTVTLEVVETPPELKGGTATKRPKPAKLNTGLEIMVPEYITNGERVLVNTTTGEFAGRAD</sequence>
<reference key="1">
    <citation type="journal article" date="2005" name="Genome Res.">
        <title>Comparative and functional genomic analyses of the pathogenicity of phytopathogen Xanthomonas campestris pv. campestris.</title>
        <authorList>
            <person name="Qian W."/>
            <person name="Jia Y."/>
            <person name="Ren S.-X."/>
            <person name="He Y.-Q."/>
            <person name="Feng J.-X."/>
            <person name="Lu L.-F."/>
            <person name="Sun Q."/>
            <person name="Ying G."/>
            <person name="Tang D.-J."/>
            <person name="Tang H."/>
            <person name="Wu W."/>
            <person name="Hao P."/>
            <person name="Wang L."/>
            <person name="Jiang B.-L."/>
            <person name="Zeng S."/>
            <person name="Gu W.-Y."/>
            <person name="Lu G."/>
            <person name="Rong L."/>
            <person name="Tian Y."/>
            <person name="Yao Z."/>
            <person name="Fu G."/>
            <person name="Chen B."/>
            <person name="Fang R."/>
            <person name="Qiang B."/>
            <person name="Chen Z."/>
            <person name="Zhao G.-P."/>
            <person name="Tang J.-L."/>
            <person name="He C."/>
        </authorList>
    </citation>
    <scope>NUCLEOTIDE SEQUENCE [LARGE SCALE GENOMIC DNA]</scope>
    <source>
        <strain>8004</strain>
    </source>
</reference>
<comment type="similarity">
    <text evidence="1">Belongs to the elongation factor P family.</text>
</comment>